<proteinExistence type="inferred from homology"/>
<sequence length="264" mass="28813">MDNRPIGFLDSGVGGLTVVSELMRQLPHEKIIYIGDSARAPYGPRPAEQIREYTWELVRFLLTKHVKMIVFACNTATAVAWEEVKEALDIPVLGVILPGASAAIKATSGGKVGVIGTSMTISSGIYQEKIQLLAPTVQVTSLACPRFVPIVESNEISSSVAKKIVYETLAPLVGKIDTLVLGCTHYPLLRTIIQNVLGPQVKLIDSGAECVRDISVLLNYFEINGSRDDEHRRHHFYTTAGSDSFQAIASAWLNQTIDVEHVTL</sequence>
<evidence type="ECO:0000255" key="1">
    <source>
        <dbReference type="HAMAP-Rule" id="MF_00258"/>
    </source>
</evidence>
<reference key="1">
    <citation type="journal article" date="2009" name="PLoS Pathog.">
        <title>Genomic evidence for the evolution of Streptococcus equi: host restriction, increased virulence, and genetic exchange with human pathogens.</title>
        <authorList>
            <person name="Holden M.T.G."/>
            <person name="Heather Z."/>
            <person name="Paillot R."/>
            <person name="Steward K.F."/>
            <person name="Webb K."/>
            <person name="Ainslie F."/>
            <person name="Jourdan T."/>
            <person name="Bason N.C."/>
            <person name="Holroyd N.E."/>
            <person name="Mungall K."/>
            <person name="Quail M.A."/>
            <person name="Sanders M."/>
            <person name="Simmonds M."/>
            <person name="Willey D."/>
            <person name="Brooks K."/>
            <person name="Aanensen D.M."/>
            <person name="Spratt B.G."/>
            <person name="Jolley K.A."/>
            <person name="Maiden M.C.J."/>
            <person name="Kehoe M."/>
            <person name="Chanter N."/>
            <person name="Bentley S.D."/>
            <person name="Robinson C."/>
            <person name="Maskell D.J."/>
            <person name="Parkhill J."/>
            <person name="Waller A.S."/>
        </authorList>
    </citation>
    <scope>NUCLEOTIDE SEQUENCE [LARGE SCALE GENOMIC DNA]</scope>
    <source>
        <strain>H70</strain>
    </source>
</reference>
<accession>C0MGG5</accession>
<organism>
    <name type="scientific">Streptococcus equi subsp. zooepidemicus (strain H70)</name>
    <dbReference type="NCBI Taxonomy" id="553483"/>
    <lineage>
        <taxon>Bacteria</taxon>
        <taxon>Bacillati</taxon>
        <taxon>Bacillota</taxon>
        <taxon>Bacilli</taxon>
        <taxon>Lactobacillales</taxon>
        <taxon>Streptococcaceae</taxon>
        <taxon>Streptococcus</taxon>
    </lineage>
</organism>
<name>MURI_STRS7</name>
<feature type="chain" id="PRO_1000204632" description="Glutamate racemase">
    <location>
        <begin position="1"/>
        <end position="264"/>
    </location>
</feature>
<feature type="active site" description="Proton donor/acceptor" evidence="1">
    <location>
        <position position="73"/>
    </location>
</feature>
<feature type="active site" description="Proton donor/acceptor" evidence="1">
    <location>
        <position position="183"/>
    </location>
</feature>
<feature type="binding site" evidence="1">
    <location>
        <begin position="10"/>
        <end position="11"/>
    </location>
    <ligand>
        <name>substrate</name>
    </ligand>
</feature>
<feature type="binding site" evidence="1">
    <location>
        <begin position="42"/>
        <end position="43"/>
    </location>
    <ligand>
        <name>substrate</name>
    </ligand>
</feature>
<feature type="binding site" evidence="1">
    <location>
        <begin position="74"/>
        <end position="75"/>
    </location>
    <ligand>
        <name>substrate</name>
    </ligand>
</feature>
<feature type="binding site" evidence="1">
    <location>
        <begin position="184"/>
        <end position="185"/>
    </location>
    <ligand>
        <name>substrate</name>
    </ligand>
</feature>
<gene>
    <name evidence="1" type="primary">murI</name>
    <name type="ordered locus">SZO_03250</name>
</gene>
<dbReference type="EC" id="5.1.1.3" evidence="1"/>
<dbReference type="EMBL" id="FM204884">
    <property type="protein sequence ID" value="CAW98144.1"/>
    <property type="molecule type" value="Genomic_DNA"/>
</dbReference>
<dbReference type="SMR" id="C0MGG5"/>
<dbReference type="KEGG" id="seq:SZO_03250"/>
<dbReference type="eggNOG" id="COG0796">
    <property type="taxonomic scope" value="Bacteria"/>
</dbReference>
<dbReference type="HOGENOM" id="CLU_052344_0_2_9"/>
<dbReference type="UniPathway" id="UPA00219"/>
<dbReference type="Proteomes" id="UP000001368">
    <property type="component" value="Chromosome"/>
</dbReference>
<dbReference type="GO" id="GO:0008881">
    <property type="term" value="F:glutamate racemase activity"/>
    <property type="evidence" value="ECO:0007669"/>
    <property type="project" value="UniProtKB-UniRule"/>
</dbReference>
<dbReference type="GO" id="GO:0071555">
    <property type="term" value="P:cell wall organization"/>
    <property type="evidence" value="ECO:0007669"/>
    <property type="project" value="UniProtKB-KW"/>
</dbReference>
<dbReference type="GO" id="GO:0009252">
    <property type="term" value="P:peptidoglycan biosynthetic process"/>
    <property type="evidence" value="ECO:0007669"/>
    <property type="project" value="UniProtKB-UniRule"/>
</dbReference>
<dbReference type="GO" id="GO:0008360">
    <property type="term" value="P:regulation of cell shape"/>
    <property type="evidence" value="ECO:0007669"/>
    <property type="project" value="UniProtKB-KW"/>
</dbReference>
<dbReference type="FunFam" id="3.40.50.1860:FF:000002">
    <property type="entry name" value="Glutamate racemase"/>
    <property type="match status" value="1"/>
</dbReference>
<dbReference type="Gene3D" id="3.40.50.1860">
    <property type="match status" value="2"/>
</dbReference>
<dbReference type="HAMAP" id="MF_00258">
    <property type="entry name" value="Glu_racemase"/>
    <property type="match status" value="1"/>
</dbReference>
<dbReference type="InterPro" id="IPR015942">
    <property type="entry name" value="Asp/Glu/hydantoin_racemase"/>
</dbReference>
<dbReference type="InterPro" id="IPR001920">
    <property type="entry name" value="Asp/Glu_race"/>
</dbReference>
<dbReference type="InterPro" id="IPR033134">
    <property type="entry name" value="Asp/Glu_racemase_AS_2"/>
</dbReference>
<dbReference type="InterPro" id="IPR004391">
    <property type="entry name" value="Glu_race"/>
</dbReference>
<dbReference type="NCBIfam" id="TIGR00067">
    <property type="entry name" value="glut_race"/>
    <property type="match status" value="1"/>
</dbReference>
<dbReference type="NCBIfam" id="NF002035">
    <property type="entry name" value="PRK00865.1-3"/>
    <property type="match status" value="1"/>
</dbReference>
<dbReference type="PANTHER" id="PTHR21198">
    <property type="entry name" value="GLUTAMATE RACEMASE"/>
    <property type="match status" value="1"/>
</dbReference>
<dbReference type="PANTHER" id="PTHR21198:SF2">
    <property type="entry name" value="GLUTAMATE RACEMASE"/>
    <property type="match status" value="1"/>
</dbReference>
<dbReference type="Pfam" id="PF01177">
    <property type="entry name" value="Asp_Glu_race"/>
    <property type="match status" value="1"/>
</dbReference>
<dbReference type="SUPFAM" id="SSF53681">
    <property type="entry name" value="Aspartate/glutamate racemase"/>
    <property type="match status" value="2"/>
</dbReference>
<dbReference type="PROSITE" id="PS00924">
    <property type="entry name" value="ASP_GLU_RACEMASE_2"/>
    <property type="match status" value="1"/>
</dbReference>
<comment type="function">
    <text evidence="1">Provides the (R)-glutamate required for cell wall biosynthesis.</text>
</comment>
<comment type="catalytic activity">
    <reaction evidence="1">
        <text>L-glutamate = D-glutamate</text>
        <dbReference type="Rhea" id="RHEA:12813"/>
        <dbReference type="ChEBI" id="CHEBI:29985"/>
        <dbReference type="ChEBI" id="CHEBI:29986"/>
        <dbReference type="EC" id="5.1.1.3"/>
    </reaction>
</comment>
<comment type="pathway">
    <text evidence="1">Cell wall biogenesis; peptidoglycan biosynthesis.</text>
</comment>
<comment type="similarity">
    <text evidence="1">Belongs to the aspartate/glutamate racemases family.</text>
</comment>
<protein>
    <recommendedName>
        <fullName evidence="1">Glutamate racemase</fullName>
        <ecNumber evidence="1">5.1.1.3</ecNumber>
    </recommendedName>
</protein>
<keyword id="KW-0133">Cell shape</keyword>
<keyword id="KW-0961">Cell wall biogenesis/degradation</keyword>
<keyword id="KW-0413">Isomerase</keyword>
<keyword id="KW-0573">Peptidoglycan synthesis</keyword>